<sequence>MFRKRNLVLESFRRFDSGNVETLISWVLCSRTSKPSLFCTSVKPARLNWEVSSQVILKKKLETALKDHRVDDAWDVFKDFKRLYGFPESVIMNRFVTVLSYSSDAGWLCKASDLTRLALKQNPGMLSGDVLTKLSLSLARAQMVESACSILRIMLEKGYVLTSDVLRLVVMHMVKTEIGTCLASNYLVQVCDRFVEFNVGKRNSSPGNVVKPDTVLFNLVLGSCVRFGFSLKGQELIELMAKVDVVADAYSIVIMSCIYEMNGMRDELRKFKEHIGQVPPQLLGHYQHFFDNLLSLEFKFDDIGSAGRLALDMCKSKVLVSVENLGFDSEKPRVLPVGSHHIRSGLKIHISPKLLQRDSSLGVDTEATFVNYSNSKLGITNKTLAKLVYGYKRHDNLPELSKLLFSLGGSRLCADVIDACVAIGWLEAAHDILDDMNSAGYPMELATYRMVLSGYYKSKMLRNAEVLLKQMTKAGLITDPSNEIVVSPETEEKDSENTELRDLLVQEINAGKQMKAPSMLYELNSSLYYFCKAKMQGDALITYRKIPKMKIPPTVQSFWILIDMYSSLGMYREITIVWGDIKRNIASKNLKTTQDLLEKLVVNFLRGGYFERVMELISYMKENDMYNDLTMYKNEYLKLHKNLYRTLKASDAVTEAQAQRLEHVKTFRKLVGIV</sequence>
<feature type="chain" id="PRO_0000363435" description="Pentatricopeptide repeat-containing protein At4g17616">
    <location>
        <begin position="1"/>
        <end position="674"/>
    </location>
</feature>
<feature type="repeat" description="PPR 1">
    <location>
        <begin position="409"/>
        <end position="443"/>
    </location>
</feature>
<feature type="repeat" description="PPR 2">
    <location>
        <begin position="444"/>
        <end position="478"/>
    </location>
</feature>
<feature type="repeat" description="PPR 3">
    <location>
        <begin position="519"/>
        <end position="553"/>
    </location>
</feature>
<feature type="repeat" description="PPR 4">
    <location>
        <begin position="554"/>
        <end position="584"/>
    </location>
</feature>
<feature type="repeat" description="PPR 5">
    <location>
        <begin position="593"/>
        <end position="627"/>
    </location>
</feature>
<comment type="similarity">
    <text evidence="1">Belongs to the PPR family. P subfamily.</text>
</comment>
<comment type="sequence caution" evidence="1">
    <conflict type="miscellaneous discrepancy">
        <sequence resource="EMBL" id="BX841548"/>
    </conflict>
    <text>Sequencing errors.</text>
</comment>
<comment type="sequence caution" evidence="1">
    <conflict type="erroneous gene model prediction">
        <sequence resource="EMBL-CDS" id="CAB10542"/>
    </conflict>
    <text>The predicted gene At4g17620 has been split into 3 genes: At4g17615, At4g17616 and At4g17620.</text>
</comment>
<comment type="sequence caution" evidence="1">
    <conflict type="erroneous gene model prediction">
        <sequence resource="EMBL-CDS" id="CAB78765"/>
    </conflict>
    <text>The predicted gene At4g17620 has been split into 3 genes: At4g17615, At4g17616 and At4g17620.</text>
</comment>
<comment type="online information" name="Pentatricopeptide repeat proteins">
    <link uri="https://ppr.plantenergy.uwa.edu.au"/>
</comment>
<protein>
    <recommendedName>
        <fullName>Pentatricopeptide repeat-containing protein At4g17616</fullName>
    </recommendedName>
</protein>
<reference key="1">
    <citation type="journal article" date="1998" name="Nature">
        <title>Analysis of 1.9 Mb of contiguous sequence from chromosome 4 of Arabidopsis thaliana.</title>
        <authorList>
            <person name="Bevan M."/>
            <person name="Bancroft I."/>
            <person name="Bent E."/>
            <person name="Love K."/>
            <person name="Goodman H.M."/>
            <person name="Dean C."/>
            <person name="Bergkamp R."/>
            <person name="Dirkse W."/>
            <person name="van Staveren M."/>
            <person name="Stiekema W."/>
            <person name="Drost L."/>
            <person name="Ridley P."/>
            <person name="Hudson S.-A."/>
            <person name="Patel K."/>
            <person name="Murphy G."/>
            <person name="Piffanelli P."/>
            <person name="Wedler H."/>
            <person name="Wedler E."/>
            <person name="Wambutt R."/>
            <person name="Weitzenegger T."/>
            <person name="Pohl T."/>
            <person name="Terryn N."/>
            <person name="Gielen J."/>
            <person name="Villarroel R."/>
            <person name="De Clercq R."/>
            <person name="van Montagu M."/>
            <person name="Lecharny A."/>
            <person name="Aubourg S."/>
            <person name="Gy I."/>
            <person name="Kreis M."/>
            <person name="Lao N."/>
            <person name="Kavanagh T."/>
            <person name="Hempel S."/>
            <person name="Kotter P."/>
            <person name="Entian K.-D."/>
            <person name="Rieger M."/>
            <person name="Schaefer M."/>
            <person name="Funk B."/>
            <person name="Mueller-Auer S."/>
            <person name="Silvey M."/>
            <person name="James R."/>
            <person name="Monfort A."/>
            <person name="Pons A."/>
            <person name="Puigdomenech P."/>
            <person name="Douka A."/>
            <person name="Voukelatou E."/>
            <person name="Milioni D."/>
            <person name="Hatzopoulos P."/>
            <person name="Piravandi E."/>
            <person name="Obermaier B."/>
            <person name="Hilbert H."/>
            <person name="Duesterhoeft A."/>
            <person name="Moores T."/>
            <person name="Jones J.D.G."/>
            <person name="Eneva T."/>
            <person name="Palme K."/>
            <person name="Benes V."/>
            <person name="Rechmann S."/>
            <person name="Ansorge W."/>
            <person name="Cooke R."/>
            <person name="Berger C."/>
            <person name="Delseny M."/>
            <person name="Voet M."/>
            <person name="Volckaert G."/>
            <person name="Mewes H.-W."/>
            <person name="Klosterman S."/>
            <person name="Schueller C."/>
            <person name="Chalwatzis N."/>
        </authorList>
    </citation>
    <scope>NUCLEOTIDE SEQUENCE [LARGE SCALE GENOMIC DNA]</scope>
    <source>
        <strain>cv. Columbia</strain>
    </source>
</reference>
<reference key="2">
    <citation type="journal article" date="1999" name="Nature">
        <title>Sequence and analysis of chromosome 4 of the plant Arabidopsis thaliana.</title>
        <authorList>
            <person name="Mayer K.F.X."/>
            <person name="Schueller C."/>
            <person name="Wambutt R."/>
            <person name="Murphy G."/>
            <person name="Volckaert G."/>
            <person name="Pohl T."/>
            <person name="Duesterhoeft A."/>
            <person name="Stiekema W."/>
            <person name="Entian K.-D."/>
            <person name="Terryn N."/>
            <person name="Harris B."/>
            <person name="Ansorge W."/>
            <person name="Brandt P."/>
            <person name="Grivell L.A."/>
            <person name="Rieger M."/>
            <person name="Weichselgartner M."/>
            <person name="de Simone V."/>
            <person name="Obermaier B."/>
            <person name="Mache R."/>
            <person name="Mueller M."/>
            <person name="Kreis M."/>
            <person name="Delseny M."/>
            <person name="Puigdomenech P."/>
            <person name="Watson M."/>
            <person name="Schmidtheini T."/>
            <person name="Reichert B."/>
            <person name="Portetelle D."/>
            <person name="Perez-Alonso M."/>
            <person name="Boutry M."/>
            <person name="Bancroft I."/>
            <person name="Vos P."/>
            <person name="Hoheisel J."/>
            <person name="Zimmermann W."/>
            <person name="Wedler H."/>
            <person name="Ridley P."/>
            <person name="Langham S.-A."/>
            <person name="McCullagh B."/>
            <person name="Bilham L."/>
            <person name="Robben J."/>
            <person name="van der Schueren J."/>
            <person name="Grymonprez B."/>
            <person name="Chuang Y.-J."/>
            <person name="Vandenbussche F."/>
            <person name="Braeken M."/>
            <person name="Weltjens I."/>
            <person name="Voet M."/>
            <person name="Bastiaens I."/>
            <person name="Aert R."/>
            <person name="Defoor E."/>
            <person name="Weitzenegger T."/>
            <person name="Bothe G."/>
            <person name="Ramsperger U."/>
            <person name="Hilbert H."/>
            <person name="Braun M."/>
            <person name="Holzer E."/>
            <person name="Brandt A."/>
            <person name="Peters S."/>
            <person name="van Staveren M."/>
            <person name="Dirkse W."/>
            <person name="Mooijman P."/>
            <person name="Klein Lankhorst R."/>
            <person name="Rose M."/>
            <person name="Hauf J."/>
            <person name="Koetter P."/>
            <person name="Berneiser S."/>
            <person name="Hempel S."/>
            <person name="Feldpausch M."/>
            <person name="Lamberth S."/>
            <person name="Van den Daele H."/>
            <person name="De Keyser A."/>
            <person name="Buysshaert C."/>
            <person name="Gielen J."/>
            <person name="Villarroel R."/>
            <person name="De Clercq R."/>
            <person name="van Montagu M."/>
            <person name="Rogers J."/>
            <person name="Cronin A."/>
            <person name="Quail M.A."/>
            <person name="Bray-Allen S."/>
            <person name="Clark L."/>
            <person name="Doggett J."/>
            <person name="Hall S."/>
            <person name="Kay M."/>
            <person name="Lennard N."/>
            <person name="McLay K."/>
            <person name="Mayes R."/>
            <person name="Pettett A."/>
            <person name="Rajandream M.A."/>
            <person name="Lyne M."/>
            <person name="Benes V."/>
            <person name="Rechmann S."/>
            <person name="Borkova D."/>
            <person name="Bloecker H."/>
            <person name="Scharfe M."/>
            <person name="Grimm M."/>
            <person name="Loehnert T.-H."/>
            <person name="Dose S."/>
            <person name="de Haan M."/>
            <person name="Maarse A.C."/>
            <person name="Schaefer M."/>
            <person name="Mueller-Auer S."/>
            <person name="Gabel C."/>
            <person name="Fuchs M."/>
            <person name="Fartmann B."/>
            <person name="Granderath K."/>
            <person name="Dauner D."/>
            <person name="Herzl A."/>
            <person name="Neumann S."/>
            <person name="Argiriou A."/>
            <person name="Vitale D."/>
            <person name="Liguori R."/>
            <person name="Piravandi E."/>
            <person name="Massenet O."/>
            <person name="Quigley F."/>
            <person name="Clabauld G."/>
            <person name="Muendlein A."/>
            <person name="Felber R."/>
            <person name="Schnabl S."/>
            <person name="Hiller R."/>
            <person name="Schmidt W."/>
            <person name="Lecharny A."/>
            <person name="Aubourg S."/>
            <person name="Chefdor F."/>
            <person name="Cooke R."/>
            <person name="Berger C."/>
            <person name="Monfort A."/>
            <person name="Casacuberta E."/>
            <person name="Gibbons T."/>
            <person name="Weber N."/>
            <person name="Vandenbol M."/>
            <person name="Bargues M."/>
            <person name="Terol J."/>
            <person name="Torres A."/>
            <person name="Perez-Perez A."/>
            <person name="Purnelle B."/>
            <person name="Bent E."/>
            <person name="Johnson S."/>
            <person name="Tacon D."/>
            <person name="Jesse T."/>
            <person name="Heijnen L."/>
            <person name="Schwarz S."/>
            <person name="Scholler P."/>
            <person name="Heber S."/>
            <person name="Francs P."/>
            <person name="Bielke C."/>
            <person name="Frishman D."/>
            <person name="Haase D."/>
            <person name="Lemcke K."/>
            <person name="Mewes H.-W."/>
            <person name="Stocker S."/>
            <person name="Zaccaria P."/>
            <person name="Bevan M."/>
            <person name="Wilson R.K."/>
            <person name="de la Bastide M."/>
            <person name="Habermann K."/>
            <person name="Parnell L."/>
            <person name="Dedhia N."/>
            <person name="Gnoj L."/>
            <person name="Schutz K."/>
            <person name="Huang E."/>
            <person name="Spiegel L."/>
            <person name="Sekhon M."/>
            <person name="Murray J."/>
            <person name="Sheet P."/>
            <person name="Cordes M."/>
            <person name="Abu-Threideh J."/>
            <person name="Stoneking T."/>
            <person name="Kalicki J."/>
            <person name="Graves T."/>
            <person name="Harmon G."/>
            <person name="Edwards J."/>
            <person name="Latreille P."/>
            <person name="Courtney L."/>
            <person name="Cloud J."/>
            <person name="Abbott A."/>
            <person name="Scott K."/>
            <person name="Johnson D."/>
            <person name="Minx P."/>
            <person name="Bentley D."/>
            <person name="Fulton B."/>
            <person name="Miller N."/>
            <person name="Greco T."/>
            <person name="Kemp K."/>
            <person name="Kramer J."/>
            <person name="Fulton L."/>
            <person name="Mardis E."/>
            <person name="Dante M."/>
            <person name="Pepin K."/>
            <person name="Hillier L.W."/>
            <person name="Nelson J."/>
            <person name="Spieth J."/>
            <person name="Ryan E."/>
            <person name="Andrews S."/>
            <person name="Geisel C."/>
            <person name="Layman D."/>
            <person name="Du H."/>
            <person name="Ali J."/>
            <person name="Berghoff A."/>
            <person name="Jones K."/>
            <person name="Drone K."/>
            <person name="Cotton M."/>
            <person name="Joshu C."/>
            <person name="Antonoiu B."/>
            <person name="Zidanic M."/>
            <person name="Strong C."/>
            <person name="Sun H."/>
            <person name="Lamar B."/>
            <person name="Yordan C."/>
            <person name="Ma P."/>
            <person name="Zhong J."/>
            <person name="Preston R."/>
            <person name="Vil D."/>
            <person name="Shekher M."/>
            <person name="Matero A."/>
            <person name="Shah R."/>
            <person name="Swaby I.K."/>
            <person name="O'Shaughnessy A."/>
            <person name="Rodriguez M."/>
            <person name="Hoffman J."/>
            <person name="Till S."/>
            <person name="Granat S."/>
            <person name="Shohdy N."/>
            <person name="Hasegawa A."/>
            <person name="Hameed A."/>
            <person name="Lodhi M."/>
            <person name="Johnson A."/>
            <person name="Chen E."/>
            <person name="Marra M.A."/>
            <person name="Martienssen R."/>
            <person name="McCombie W.R."/>
        </authorList>
    </citation>
    <scope>NUCLEOTIDE SEQUENCE [LARGE SCALE GENOMIC DNA]</scope>
    <source>
        <strain>cv. Columbia</strain>
    </source>
</reference>
<reference key="3">
    <citation type="journal article" date="2017" name="Plant J.">
        <title>Araport11: a complete reannotation of the Arabidopsis thaliana reference genome.</title>
        <authorList>
            <person name="Cheng C.Y."/>
            <person name="Krishnakumar V."/>
            <person name="Chan A.P."/>
            <person name="Thibaud-Nissen F."/>
            <person name="Schobel S."/>
            <person name="Town C.D."/>
        </authorList>
    </citation>
    <scope>GENOME REANNOTATION</scope>
    <source>
        <strain>cv. Columbia</strain>
    </source>
</reference>
<reference key="4">
    <citation type="journal article" date="2004" name="Genome Res.">
        <title>Whole genome sequence comparisons and 'full-length' cDNA sequences: a combined approach to evaluate and improve Arabidopsis genome annotation.</title>
        <authorList>
            <person name="Castelli V."/>
            <person name="Aury J.-M."/>
            <person name="Jaillon O."/>
            <person name="Wincker P."/>
            <person name="Clepet C."/>
            <person name="Menard M."/>
            <person name="Cruaud C."/>
            <person name="Quetier F."/>
            <person name="Scarpelli C."/>
            <person name="Schaechter V."/>
            <person name="Temple G."/>
            <person name="Caboche M."/>
            <person name="Weissenbach J."/>
            <person name="Salanoubat M."/>
        </authorList>
    </citation>
    <scope>NUCLEOTIDE SEQUENCE [LARGE SCALE MRNA] OF 1-197</scope>
    <source>
        <strain>cv. Columbia</strain>
    </source>
</reference>
<reference key="5">
    <citation type="journal article" date="2004" name="Plant Cell">
        <title>Genome-wide analysis of Arabidopsis pentatricopeptide repeat proteins reveals their essential role in organelle biogenesis.</title>
        <authorList>
            <person name="Lurin C."/>
            <person name="Andres C."/>
            <person name="Aubourg S."/>
            <person name="Bellaoui M."/>
            <person name="Bitton F."/>
            <person name="Bruyere C."/>
            <person name="Caboche M."/>
            <person name="Debast C."/>
            <person name="Gualberto J."/>
            <person name="Hoffmann B."/>
            <person name="Lecharny A."/>
            <person name="Le Ret M."/>
            <person name="Martin-Magniette M.-L."/>
            <person name="Mireau H."/>
            <person name="Peeters N."/>
            <person name="Renou J.-P."/>
            <person name="Szurek B."/>
            <person name="Taconnat L."/>
            <person name="Small I."/>
        </authorList>
    </citation>
    <scope>GENE FAMILY</scope>
</reference>
<gene>
    <name type="ordered locus">At4g17616</name>
    <name type="ORF">dl4845w</name>
    <name type="ORF">FCAALL</name>
</gene>
<evidence type="ECO:0000305" key="1"/>
<proteinExistence type="evidence at transcript level"/>
<organism>
    <name type="scientific">Arabidopsis thaliana</name>
    <name type="common">Mouse-ear cress</name>
    <dbReference type="NCBI Taxonomy" id="3702"/>
    <lineage>
        <taxon>Eukaryota</taxon>
        <taxon>Viridiplantae</taxon>
        <taxon>Streptophyta</taxon>
        <taxon>Embryophyta</taxon>
        <taxon>Tracheophyta</taxon>
        <taxon>Spermatophyta</taxon>
        <taxon>Magnoliopsida</taxon>
        <taxon>eudicotyledons</taxon>
        <taxon>Gunneridae</taxon>
        <taxon>Pentapetalae</taxon>
        <taxon>rosids</taxon>
        <taxon>malvids</taxon>
        <taxon>Brassicales</taxon>
        <taxon>Brassicaceae</taxon>
        <taxon>Camelineae</taxon>
        <taxon>Arabidopsis</taxon>
    </lineage>
</organism>
<accession>B3H672</accession>
<accession>O23603</accession>
<name>PP317_ARATH</name>
<dbReference type="EMBL" id="Z97343">
    <property type="protein sequence ID" value="CAB10542.1"/>
    <property type="status" value="ALT_SEQ"/>
    <property type="molecule type" value="Genomic_DNA"/>
</dbReference>
<dbReference type="EMBL" id="AL161546">
    <property type="protein sequence ID" value="CAB78765.1"/>
    <property type="status" value="ALT_SEQ"/>
    <property type="molecule type" value="Genomic_DNA"/>
</dbReference>
<dbReference type="EMBL" id="CP002687">
    <property type="protein sequence ID" value="AEE83923.1"/>
    <property type="molecule type" value="Genomic_DNA"/>
</dbReference>
<dbReference type="EMBL" id="BX841548">
    <property type="status" value="NOT_ANNOTATED_CDS"/>
    <property type="molecule type" value="mRNA"/>
</dbReference>
<dbReference type="RefSeq" id="NP_001119002.1">
    <property type="nucleotide sequence ID" value="NM_001125530.2"/>
</dbReference>
<dbReference type="FunCoup" id="B3H672">
    <property type="interactions" value="1162"/>
</dbReference>
<dbReference type="STRING" id="3702.B3H672"/>
<dbReference type="PaxDb" id="3702-AT4G17616.1"/>
<dbReference type="ProteomicsDB" id="248984"/>
<dbReference type="EnsemblPlants" id="AT4G17616.1">
    <property type="protein sequence ID" value="AT4G17616.1"/>
    <property type="gene ID" value="AT4G17616"/>
</dbReference>
<dbReference type="GeneID" id="6240541"/>
<dbReference type="Gramene" id="AT4G17616.1">
    <property type="protein sequence ID" value="AT4G17616.1"/>
    <property type="gene ID" value="AT4G17616"/>
</dbReference>
<dbReference type="KEGG" id="ath:AT4G17616"/>
<dbReference type="Araport" id="AT4G17616"/>
<dbReference type="TAIR" id="AT4G17616"/>
<dbReference type="eggNOG" id="ENOG502QTHQ">
    <property type="taxonomic scope" value="Eukaryota"/>
</dbReference>
<dbReference type="HOGENOM" id="CLU_008969_0_1_1"/>
<dbReference type="InParanoid" id="B3H672"/>
<dbReference type="OMA" id="MHREIAM"/>
<dbReference type="PhylomeDB" id="B3H672"/>
<dbReference type="PRO" id="PR:B3H672"/>
<dbReference type="Proteomes" id="UP000006548">
    <property type="component" value="Chromosome 4"/>
</dbReference>
<dbReference type="ExpressionAtlas" id="B3H672">
    <property type="expression patterns" value="baseline and differential"/>
</dbReference>
<dbReference type="Gene3D" id="1.25.40.10">
    <property type="entry name" value="Tetratricopeptide repeat domain"/>
    <property type="match status" value="3"/>
</dbReference>
<dbReference type="InterPro" id="IPR002885">
    <property type="entry name" value="Pentatricopeptide_rpt"/>
</dbReference>
<dbReference type="InterPro" id="IPR011990">
    <property type="entry name" value="TPR-like_helical_dom_sf"/>
</dbReference>
<dbReference type="PANTHER" id="PTHR46598">
    <property type="entry name" value="BNAC05G43320D PROTEIN"/>
    <property type="match status" value="1"/>
</dbReference>
<dbReference type="PANTHER" id="PTHR46598:SF3">
    <property type="entry name" value="OS07G0495300 PROTEIN"/>
    <property type="match status" value="1"/>
</dbReference>
<dbReference type="Pfam" id="PF01535">
    <property type="entry name" value="PPR"/>
    <property type="match status" value="2"/>
</dbReference>
<dbReference type="Pfam" id="PF25245">
    <property type="entry name" value="TPR_At1g68980"/>
    <property type="match status" value="1"/>
</dbReference>
<dbReference type="PROSITE" id="PS51375">
    <property type="entry name" value="PPR"/>
    <property type="match status" value="7"/>
</dbReference>
<keyword id="KW-1185">Reference proteome</keyword>
<keyword id="KW-0677">Repeat</keyword>